<feature type="chain" id="PRO_1000136055" description="Ribosome rescue factor SmrB">
    <location>
        <begin position="1"/>
        <end position="183"/>
    </location>
</feature>
<feature type="domain" description="Smr" evidence="1">
    <location>
        <begin position="98"/>
        <end position="173"/>
    </location>
</feature>
<comment type="function">
    <text evidence="1">Acts as a ribosome collision sensor. Detects stalled/collided disomes (pairs of ribosomes where the leading ribosome is stalled and a second ribosome has collided with it) and endonucleolytically cleaves mRNA at the 5' boundary of the stalled ribosome. Stalled/collided disomes form a new interface (primarily via the 30S subunits) that binds SmrB. Cleaved mRNA becomes available for tmRNA ligation, leading to ribosomal subunit dissociation and rescue of stalled ribosomes.</text>
</comment>
<comment type="subunit">
    <text evidence="1">Associates with collided ribosomes, but not with correctly translating polysomes.</text>
</comment>
<comment type="similarity">
    <text evidence="1">Belongs to the SmrB family.</text>
</comment>
<proteinExistence type="inferred from homology"/>
<reference key="1">
    <citation type="submission" date="2008-05" db="EMBL/GenBank/DDBJ databases">
        <title>Complete sequence of Shigella boydii serotype 18 strain BS512.</title>
        <authorList>
            <person name="Rasko D.A."/>
            <person name="Rosovitz M."/>
            <person name="Maurelli A.T."/>
            <person name="Myers G."/>
            <person name="Seshadri R."/>
            <person name="Cer R."/>
            <person name="Jiang L."/>
            <person name="Ravel J."/>
            <person name="Sebastian Y."/>
        </authorList>
    </citation>
    <scope>NUCLEOTIDE SEQUENCE [LARGE SCALE GENOMIC DNA]</scope>
    <source>
        <strain>CDC 3083-94 / BS512</strain>
    </source>
</reference>
<keyword id="KW-0255">Endonuclease</keyword>
<keyword id="KW-0378">Hydrolase</keyword>
<keyword id="KW-0540">Nuclease</keyword>
<keyword id="KW-1185">Reference proteome</keyword>
<keyword id="KW-0694">RNA-binding</keyword>
<keyword id="KW-0699">rRNA-binding</keyword>
<protein>
    <recommendedName>
        <fullName evidence="1">Ribosome rescue factor SmrB</fullName>
        <ecNumber evidence="1">3.1.-.-</ecNumber>
    </recommendedName>
</protein>
<sequence length="183" mass="21013">MKKKTTLSEEDQALFRQLMAGTRKIKQDTIVHRPQRKKISEVPVKRLIQEQADASHYFSDEFQPLLNTEGPVKYVRPDVSHFEAKKLRRGDYSPELFLDLHGLTQLQAKQELGALIAACRREHVFCACVMHGHGKHILKQQTPLWLAQHPHVMAFHQAPKEYGGDAALLVLIEVEEWLPPELP</sequence>
<gene>
    <name evidence="1" type="primary">smrB</name>
    <name type="ordered locus">SbBS512_E2709</name>
</gene>
<accession>B2TWB3</accession>
<name>SMRB_SHIB3</name>
<evidence type="ECO:0000255" key="1">
    <source>
        <dbReference type="HAMAP-Rule" id="MF_01042"/>
    </source>
</evidence>
<dbReference type="EC" id="3.1.-.-" evidence="1"/>
<dbReference type="EMBL" id="CP001063">
    <property type="protein sequence ID" value="ACD07820.1"/>
    <property type="molecule type" value="Genomic_DNA"/>
</dbReference>
<dbReference type="RefSeq" id="WP_000730806.1">
    <property type="nucleotide sequence ID" value="NC_010658.1"/>
</dbReference>
<dbReference type="SMR" id="B2TWB3"/>
<dbReference type="STRING" id="344609.SbBS512_E2709"/>
<dbReference type="GeneID" id="93774844"/>
<dbReference type="KEGG" id="sbc:SbBS512_E2709"/>
<dbReference type="HOGENOM" id="CLU_055978_4_0_6"/>
<dbReference type="Proteomes" id="UP000001030">
    <property type="component" value="Chromosome"/>
</dbReference>
<dbReference type="GO" id="GO:0004521">
    <property type="term" value="F:RNA endonuclease activity"/>
    <property type="evidence" value="ECO:0007669"/>
    <property type="project" value="UniProtKB-UniRule"/>
</dbReference>
<dbReference type="GO" id="GO:0019843">
    <property type="term" value="F:rRNA binding"/>
    <property type="evidence" value="ECO:0007669"/>
    <property type="project" value="UniProtKB-UniRule"/>
</dbReference>
<dbReference type="GO" id="GO:0072344">
    <property type="term" value="P:rescue of stalled ribosome"/>
    <property type="evidence" value="ECO:0007669"/>
    <property type="project" value="UniProtKB-UniRule"/>
</dbReference>
<dbReference type="Gene3D" id="3.30.1370.110">
    <property type="match status" value="1"/>
</dbReference>
<dbReference type="HAMAP" id="MF_01042">
    <property type="entry name" value="SmrB"/>
    <property type="match status" value="1"/>
</dbReference>
<dbReference type="InterPro" id="IPR002625">
    <property type="entry name" value="Smr_dom"/>
</dbReference>
<dbReference type="InterPro" id="IPR036063">
    <property type="entry name" value="Smr_dom_sf"/>
</dbReference>
<dbReference type="InterPro" id="IPR022990">
    <property type="entry name" value="SmrB-like"/>
</dbReference>
<dbReference type="NCBIfam" id="NF003432">
    <property type="entry name" value="PRK04946.1"/>
    <property type="match status" value="1"/>
</dbReference>
<dbReference type="PANTHER" id="PTHR35562">
    <property type="entry name" value="DNA ENDONUCLEASE SMRA-RELATED"/>
    <property type="match status" value="1"/>
</dbReference>
<dbReference type="PANTHER" id="PTHR35562:SF1">
    <property type="entry name" value="UPF0115 PROTEIN YFCN"/>
    <property type="match status" value="1"/>
</dbReference>
<dbReference type="Pfam" id="PF01713">
    <property type="entry name" value="Smr"/>
    <property type="match status" value="1"/>
</dbReference>
<dbReference type="SMART" id="SM00463">
    <property type="entry name" value="SMR"/>
    <property type="match status" value="1"/>
</dbReference>
<dbReference type="SUPFAM" id="SSF160443">
    <property type="entry name" value="SMR domain-like"/>
    <property type="match status" value="1"/>
</dbReference>
<dbReference type="PROSITE" id="PS50828">
    <property type="entry name" value="SMR"/>
    <property type="match status" value="1"/>
</dbReference>
<organism>
    <name type="scientific">Shigella boydii serotype 18 (strain CDC 3083-94 / BS512)</name>
    <dbReference type="NCBI Taxonomy" id="344609"/>
    <lineage>
        <taxon>Bacteria</taxon>
        <taxon>Pseudomonadati</taxon>
        <taxon>Pseudomonadota</taxon>
        <taxon>Gammaproteobacteria</taxon>
        <taxon>Enterobacterales</taxon>
        <taxon>Enterobacteriaceae</taxon>
        <taxon>Shigella</taxon>
    </lineage>
</organism>